<organism>
    <name type="scientific">Thermoanaerobacter sp. (strain X514)</name>
    <dbReference type="NCBI Taxonomy" id="399726"/>
    <lineage>
        <taxon>Bacteria</taxon>
        <taxon>Bacillati</taxon>
        <taxon>Bacillota</taxon>
        <taxon>Clostridia</taxon>
        <taxon>Thermoanaerobacterales</taxon>
        <taxon>Thermoanaerobacteraceae</taxon>
        <taxon>Thermoanaerobacter</taxon>
    </lineage>
</organism>
<reference key="1">
    <citation type="submission" date="2008-01" db="EMBL/GenBank/DDBJ databases">
        <title>Complete sequence of Thermoanaerobacter sp. X514.</title>
        <authorList>
            <consortium name="US DOE Joint Genome Institute"/>
            <person name="Copeland A."/>
            <person name="Lucas S."/>
            <person name="Lapidus A."/>
            <person name="Barry K."/>
            <person name="Glavina del Rio T."/>
            <person name="Dalin E."/>
            <person name="Tice H."/>
            <person name="Pitluck S."/>
            <person name="Bruce D."/>
            <person name="Goodwin L."/>
            <person name="Saunders E."/>
            <person name="Brettin T."/>
            <person name="Detter J.C."/>
            <person name="Han C."/>
            <person name="Schmutz J."/>
            <person name="Larimer F."/>
            <person name="Land M."/>
            <person name="Hauser L."/>
            <person name="Kyrpides N."/>
            <person name="Kim E."/>
            <person name="Hemme C."/>
            <person name="Fields M.W."/>
            <person name="He Z."/>
            <person name="Zhou J."/>
            <person name="Richardson P."/>
        </authorList>
    </citation>
    <scope>NUCLEOTIDE SEQUENCE [LARGE SCALE GENOMIC DNA]</scope>
    <source>
        <strain>X514</strain>
    </source>
</reference>
<comment type="function">
    <text evidence="1">Catalyzes a reversible aldol reaction between acetaldehyde and D-glyceraldehyde 3-phosphate to generate 2-deoxy-D-ribose 5-phosphate.</text>
</comment>
<comment type="catalytic activity">
    <reaction evidence="1">
        <text>2-deoxy-D-ribose 5-phosphate = D-glyceraldehyde 3-phosphate + acetaldehyde</text>
        <dbReference type="Rhea" id="RHEA:12821"/>
        <dbReference type="ChEBI" id="CHEBI:15343"/>
        <dbReference type="ChEBI" id="CHEBI:59776"/>
        <dbReference type="ChEBI" id="CHEBI:62877"/>
        <dbReference type="EC" id="4.1.2.4"/>
    </reaction>
</comment>
<comment type="pathway">
    <text evidence="1">Carbohydrate degradation; 2-deoxy-D-ribose 1-phosphate degradation; D-glyceraldehyde 3-phosphate and acetaldehyde from 2-deoxy-alpha-D-ribose 1-phosphate: step 2/2.</text>
</comment>
<comment type="subcellular location">
    <subcellularLocation>
        <location evidence="1">Cytoplasm</location>
    </subcellularLocation>
</comment>
<comment type="similarity">
    <text evidence="1">Belongs to the DeoC/FbaB aldolase family. DeoC type 1 subfamily.</text>
</comment>
<proteinExistence type="inferred from homology"/>
<feature type="chain" id="PRO_1000094863" description="Deoxyribose-phosphate aldolase">
    <location>
        <begin position="1"/>
        <end position="223"/>
    </location>
</feature>
<feature type="active site" description="Proton donor/acceptor" evidence="1">
    <location>
        <position position="89"/>
    </location>
</feature>
<feature type="active site" description="Schiff-base intermediate with acetaldehyde" evidence="1">
    <location>
        <position position="154"/>
    </location>
</feature>
<feature type="active site" description="Proton donor/acceptor" evidence="1">
    <location>
        <position position="183"/>
    </location>
</feature>
<accession>B0K709</accession>
<sequence>MNIAKMIDHTLLKPNATKSEIEKLCNEAKEYGFASVCINPCFVDLAYSMLKDTDVKVCTVIGFPLGANTIETKVFEAVEAVKKGATEVDMVLNISMLKSGDYDYVKKEIEEVVKAVKSYGDIVVKVILETCYLTVEEKVKACQLTKEAGADFVKTSTGFGPGGATVEDVKLMRQAVGENFGVKASGGVRTAEDAKAMIEAGANRIGASAGVKIVEEWNKLKMS</sequence>
<keyword id="KW-0963">Cytoplasm</keyword>
<keyword id="KW-0456">Lyase</keyword>
<keyword id="KW-0704">Schiff base</keyword>
<dbReference type="EC" id="4.1.2.4" evidence="1"/>
<dbReference type="EMBL" id="CP000923">
    <property type="protein sequence ID" value="ABY92635.1"/>
    <property type="molecule type" value="Genomic_DNA"/>
</dbReference>
<dbReference type="RefSeq" id="WP_004403811.1">
    <property type="nucleotide sequence ID" value="NC_010320.1"/>
</dbReference>
<dbReference type="SMR" id="B0K709"/>
<dbReference type="KEGG" id="tex:Teth514_1345"/>
<dbReference type="HOGENOM" id="CLU_053595_0_2_9"/>
<dbReference type="UniPathway" id="UPA00002">
    <property type="reaction ID" value="UER00468"/>
</dbReference>
<dbReference type="Proteomes" id="UP000002155">
    <property type="component" value="Chromosome"/>
</dbReference>
<dbReference type="GO" id="GO:0005737">
    <property type="term" value="C:cytoplasm"/>
    <property type="evidence" value="ECO:0007669"/>
    <property type="project" value="UniProtKB-SubCell"/>
</dbReference>
<dbReference type="GO" id="GO:0004139">
    <property type="term" value="F:deoxyribose-phosphate aldolase activity"/>
    <property type="evidence" value="ECO:0007669"/>
    <property type="project" value="UniProtKB-UniRule"/>
</dbReference>
<dbReference type="GO" id="GO:0006018">
    <property type="term" value="P:2-deoxyribose 1-phosphate catabolic process"/>
    <property type="evidence" value="ECO:0007669"/>
    <property type="project" value="UniProtKB-UniRule"/>
</dbReference>
<dbReference type="GO" id="GO:0016052">
    <property type="term" value="P:carbohydrate catabolic process"/>
    <property type="evidence" value="ECO:0007669"/>
    <property type="project" value="TreeGrafter"/>
</dbReference>
<dbReference type="GO" id="GO:0009264">
    <property type="term" value="P:deoxyribonucleotide catabolic process"/>
    <property type="evidence" value="ECO:0007669"/>
    <property type="project" value="InterPro"/>
</dbReference>
<dbReference type="CDD" id="cd00959">
    <property type="entry name" value="DeoC"/>
    <property type="match status" value="1"/>
</dbReference>
<dbReference type="FunFam" id="3.20.20.70:FF:000044">
    <property type="entry name" value="Deoxyribose-phosphate aldolase"/>
    <property type="match status" value="1"/>
</dbReference>
<dbReference type="Gene3D" id="3.20.20.70">
    <property type="entry name" value="Aldolase class I"/>
    <property type="match status" value="1"/>
</dbReference>
<dbReference type="HAMAP" id="MF_00114">
    <property type="entry name" value="DeoC_type1"/>
    <property type="match status" value="1"/>
</dbReference>
<dbReference type="InterPro" id="IPR013785">
    <property type="entry name" value="Aldolase_TIM"/>
</dbReference>
<dbReference type="InterPro" id="IPR011343">
    <property type="entry name" value="DeoC"/>
</dbReference>
<dbReference type="InterPro" id="IPR002915">
    <property type="entry name" value="DeoC/FbaB/LacD_aldolase"/>
</dbReference>
<dbReference type="InterPro" id="IPR028581">
    <property type="entry name" value="DeoC_typeI"/>
</dbReference>
<dbReference type="NCBIfam" id="TIGR00126">
    <property type="entry name" value="deoC"/>
    <property type="match status" value="1"/>
</dbReference>
<dbReference type="PANTHER" id="PTHR10889">
    <property type="entry name" value="DEOXYRIBOSE-PHOSPHATE ALDOLASE"/>
    <property type="match status" value="1"/>
</dbReference>
<dbReference type="PANTHER" id="PTHR10889:SF1">
    <property type="entry name" value="DEOXYRIBOSE-PHOSPHATE ALDOLASE"/>
    <property type="match status" value="1"/>
</dbReference>
<dbReference type="Pfam" id="PF01791">
    <property type="entry name" value="DeoC"/>
    <property type="match status" value="1"/>
</dbReference>
<dbReference type="PIRSF" id="PIRSF001357">
    <property type="entry name" value="DeoC"/>
    <property type="match status" value="1"/>
</dbReference>
<dbReference type="SMART" id="SM01133">
    <property type="entry name" value="DeoC"/>
    <property type="match status" value="1"/>
</dbReference>
<dbReference type="SUPFAM" id="SSF51569">
    <property type="entry name" value="Aldolase"/>
    <property type="match status" value="1"/>
</dbReference>
<gene>
    <name evidence="1" type="primary">deoC</name>
    <name type="ordered locus">Teth514_1345</name>
</gene>
<protein>
    <recommendedName>
        <fullName evidence="1">Deoxyribose-phosphate aldolase</fullName>
        <shortName evidence="1">DERA</shortName>
        <ecNumber evidence="1">4.1.2.4</ecNumber>
    </recommendedName>
    <alternativeName>
        <fullName evidence="1">2-deoxy-D-ribose 5-phosphate aldolase</fullName>
    </alternativeName>
    <alternativeName>
        <fullName evidence="1">Phosphodeoxyriboaldolase</fullName>
        <shortName evidence="1">Deoxyriboaldolase</shortName>
    </alternativeName>
</protein>
<evidence type="ECO:0000255" key="1">
    <source>
        <dbReference type="HAMAP-Rule" id="MF_00114"/>
    </source>
</evidence>
<name>DEOC_THEPX</name>